<keyword id="KW-0963">Cytoplasm</keyword>
<keyword id="KW-0378">Hydrolase</keyword>
<keyword id="KW-0479">Metal-binding</keyword>
<keyword id="KW-0645">Protease</keyword>
<keyword id="KW-1185">Reference proteome</keyword>
<keyword id="KW-0788">Thiol protease</keyword>
<keyword id="KW-0833">Ubl conjugation pathway</keyword>
<keyword id="KW-0862">Zinc</keyword>
<keyword id="KW-0863">Zinc-finger</keyword>
<accession>Q55BI3</accession>
<evidence type="ECO:0000250" key="1">
    <source>
        <dbReference type="UniProtKB" id="Q5VVQ6"/>
    </source>
</evidence>
<evidence type="ECO:0000250" key="2">
    <source>
        <dbReference type="UniProtKB" id="Q96FW1"/>
    </source>
</evidence>
<evidence type="ECO:0000255" key="3">
    <source>
        <dbReference type="PROSITE-ProRule" id="PRU00139"/>
    </source>
</evidence>
<name>OTU1_DICDI</name>
<comment type="function">
    <text evidence="1">Hydrolase that can remove conjugated ubiquitin from proteins and may therefore play an important regulatory role at the level of protein turnover by preventing degradation.</text>
</comment>
<comment type="catalytic activity">
    <reaction evidence="1">
        <text>Thiol-dependent hydrolysis of ester, thioester, amide, peptide and isopeptide bonds formed by the C-terminal Gly of ubiquitin (a 76-residue protein attached to proteins as an intracellular targeting signal).</text>
        <dbReference type="EC" id="3.4.19.12"/>
    </reaction>
</comment>
<comment type="subcellular location">
    <subcellularLocation>
        <location evidence="1">Cytoplasm</location>
    </subcellularLocation>
</comment>
<sequence>MSLISIRIRSKTGVENIKLESQLKLKELQNIIEEKTKISTDTQKILYGFPPKALDLSNQDAVISGFLANGDTITIENVSSISSNPGVDSVTNDKVTSSTNSFDRNIKSQPFISQEEEEDGGYATRRVTDDDNSCLFSAVAYVLEDKNRLKGYSLRALIAQNVKSDPFEYNEAVLGKSNEGYCNWIQNPKNWGGAIELSILSNHYKVEIAAFDISTQLMYCYGEDRKYTERVYLIYDGIHYDALSICLTKNGPEDFDITRFSVDDKDSLAKMKVLIEKEFKAGKFTDTAKFSLICLNCNKTLKGEKEAAIHASTTGHGNFTEYKKR</sequence>
<proteinExistence type="inferred from homology"/>
<protein>
    <recommendedName>
        <fullName>Ubiquitin thioesterase OTU1</fullName>
        <ecNumber evidence="1">3.4.19.12</ecNumber>
    </recommendedName>
</protein>
<gene>
    <name type="primary">yod1</name>
    <name type="ORF">DDB_G0271346</name>
</gene>
<dbReference type="EC" id="3.4.19.12" evidence="1"/>
<dbReference type="EMBL" id="AAFI02000006">
    <property type="protein sequence ID" value="EAL71803.1"/>
    <property type="molecule type" value="Genomic_DNA"/>
</dbReference>
<dbReference type="RefSeq" id="XP_645629.1">
    <property type="nucleotide sequence ID" value="XM_640537.1"/>
</dbReference>
<dbReference type="SMR" id="Q55BI3"/>
<dbReference type="FunCoup" id="Q55BI3">
    <property type="interactions" value="330"/>
</dbReference>
<dbReference type="STRING" id="44689.Q55BI3"/>
<dbReference type="MEROPS" id="C85.007"/>
<dbReference type="PaxDb" id="44689-DDB0266410"/>
<dbReference type="EnsemblProtists" id="EAL71803">
    <property type="protein sequence ID" value="EAL71803"/>
    <property type="gene ID" value="DDB_G0271346"/>
</dbReference>
<dbReference type="GeneID" id="8617821"/>
<dbReference type="KEGG" id="ddi:DDB_G0271346"/>
<dbReference type="dictyBase" id="DDB_G0271346">
    <property type="gene designation" value="yod1"/>
</dbReference>
<dbReference type="VEuPathDB" id="AmoebaDB:DDB_G0271346"/>
<dbReference type="eggNOG" id="KOG3288">
    <property type="taxonomic scope" value="Eukaryota"/>
</dbReference>
<dbReference type="HOGENOM" id="CLU_049327_1_1_1"/>
<dbReference type="InParanoid" id="Q55BI3"/>
<dbReference type="OMA" id="VDEYCAW"/>
<dbReference type="PhylomeDB" id="Q55BI3"/>
<dbReference type="Reactome" id="R-DDI-5689896">
    <property type="pathway name" value="Ovarian tumor domain proteases"/>
</dbReference>
<dbReference type="PRO" id="PR:Q55BI3"/>
<dbReference type="Proteomes" id="UP000002195">
    <property type="component" value="Chromosome 2"/>
</dbReference>
<dbReference type="GO" id="GO:0005737">
    <property type="term" value="C:cytoplasm"/>
    <property type="evidence" value="ECO:0000250"/>
    <property type="project" value="UniProtKB"/>
</dbReference>
<dbReference type="GO" id="GO:0004843">
    <property type="term" value="F:cysteine-type deubiquitinase activity"/>
    <property type="evidence" value="ECO:0000250"/>
    <property type="project" value="dictyBase"/>
</dbReference>
<dbReference type="GO" id="GO:0008270">
    <property type="term" value="F:zinc ion binding"/>
    <property type="evidence" value="ECO:0007669"/>
    <property type="project" value="UniProtKB-KW"/>
</dbReference>
<dbReference type="GO" id="GO:0030968">
    <property type="term" value="P:endoplasmic reticulum unfolded protein response"/>
    <property type="evidence" value="ECO:0000318"/>
    <property type="project" value="GO_Central"/>
</dbReference>
<dbReference type="GO" id="GO:0036503">
    <property type="term" value="P:ERAD pathway"/>
    <property type="evidence" value="ECO:0000318"/>
    <property type="project" value="GO_Central"/>
</dbReference>
<dbReference type="GO" id="GO:0016579">
    <property type="term" value="P:protein deubiquitination"/>
    <property type="evidence" value="ECO:0000250"/>
    <property type="project" value="dictyBase"/>
</dbReference>
<dbReference type="GO" id="GO:0030587">
    <property type="term" value="P:sorocarp development"/>
    <property type="evidence" value="ECO:0007001"/>
    <property type="project" value="dictyBase"/>
</dbReference>
<dbReference type="CDD" id="cd22793">
    <property type="entry name" value="OTU_plant_OTU1_2-like"/>
    <property type="match status" value="1"/>
</dbReference>
<dbReference type="CDD" id="cd17059">
    <property type="entry name" value="Ubl_OTU1"/>
    <property type="match status" value="1"/>
</dbReference>
<dbReference type="FunFam" id="3.90.70.80:FF:000016">
    <property type="entry name" value="Putative ubiquitin thioesterase otu1"/>
    <property type="match status" value="1"/>
</dbReference>
<dbReference type="FunFam" id="3.10.20.90:FF:000096">
    <property type="entry name" value="Ubiquitin thioesterase OTU1"/>
    <property type="match status" value="1"/>
</dbReference>
<dbReference type="Gene3D" id="3.90.70.80">
    <property type="match status" value="1"/>
</dbReference>
<dbReference type="Gene3D" id="3.10.20.90">
    <property type="entry name" value="Phosphatidylinositol 3-kinase Catalytic Subunit, Chain A, domain 1"/>
    <property type="match status" value="1"/>
</dbReference>
<dbReference type="InterPro" id="IPR048857">
    <property type="entry name" value="OTU1_Ubl"/>
</dbReference>
<dbReference type="InterPro" id="IPR003323">
    <property type="entry name" value="OTU_dom"/>
</dbReference>
<dbReference type="InterPro" id="IPR038765">
    <property type="entry name" value="Papain-like_cys_pep_sf"/>
</dbReference>
<dbReference type="InterPro" id="IPR029071">
    <property type="entry name" value="Ubiquitin-like_domsf"/>
</dbReference>
<dbReference type="PANTHER" id="PTHR13312">
    <property type="entry name" value="HIV-INDUCED PROTEIN-7-LIKE PROTEASE"/>
    <property type="match status" value="1"/>
</dbReference>
<dbReference type="PANTHER" id="PTHR13312:SF0">
    <property type="entry name" value="UBIQUITIN THIOESTERASE OTU1"/>
    <property type="match status" value="1"/>
</dbReference>
<dbReference type="Pfam" id="PF02338">
    <property type="entry name" value="OTU"/>
    <property type="match status" value="1"/>
</dbReference>
<dbReference type="Pfam" id="PF21403">
    <property type="entry name" value="OTU1_UBXL"/>
    <property type="match status" value="1"/>
</dbReference>
<dbReference type="Pfam" id="PF24560">
    <property type="entry name" value="zf-C2H2_OTU1_C"/>
    <property type="match status" value="1"/>
</dbReference>
<dbReference type="SUPFAM" id="SSF54001">
    <property type="entry name" value="Cysteine proteinases"/>
    <property type="match status" value="1"/>
</dbReference>
<dbReference type="SUPFAM" id="SSF54236">
    <property type="entry name" value="Ubiquitin-like"/>
    <property type="match status" value="1"/>
</dbReference>
<dbReference type="PROSITE" id="PS50802">
    <property type="entry name" value="OTU"/>
    <property type="match status" value="1"/>
</dbReference>
<dbReference type="PROSITE" id="PS00028">
    <property type="entry name" value="ZINC_FINGER_C2H2_1"/>
    <property type="match status" value="1"/>
</dbReference>
<feature type="chain" id="PRO_0000328367" description="Ubiquitin thioesterase OTU1">
    <location>
        <begin position="1"/>
        <end position="325"/>
    </location>
</feature>
<feature type="domain" description="OTU" evidence="3">
    <location>
        <begin position="123"/>
        <end position="246"/>
    </location>
</feature>
<feature type="zinc finger region" description="C2H2-type">
    <location>
        <begin position="292"/>
        <end position="316"/>
    </location>
</feature>
<feature type="region of interest" description="UBX-like" evidence="1">
    <location>
        <begin position="7"/>
        <end position="86"/>
    </location>
</feature>
<feature type="region of interest" description="Cys-loop" evidence="1">
    <location>
        <begin position="128"/>
        <end position="134"/>
    </location>
</feature>
<feature type="region of interest" description="Variable-loop" evidence="1">
    <location>
        <begin position="185"/>
        <end position="195"/>
    </location>
</feature>
<feature type="region of interest" description="His-loop" evidence="1">
    <location>
        <begin position="235"/>
        <end position="239"/>
    </location>
</feature>
<feature type="region of interest" description="S2 site" evidence="1">
    <location>
        <begin position="265"/>
        <end position="270"/>
    </location>
</feature>
<feature type="active site" evidence="2">
    <location>
        <position position="131"/>
    </location>
</feature>
<feature type="active site" description="Nucleophile" evidence="1">
    <location>
        <position position="134"/>
    </location>
</feature>
<feature type="active site" evidence="1">
    <location>
        <position position="239"/>
    </location>
</feature>
<feature type="active site" evidence="2">
    <location>
        <position position="316"/>
    </location>
</feature>
<feature type="binding site" evidence="1">
    <location>
        <position position="238"/>
    </location>
    <ligand>
        <name>substrate</name>
    </ligand>
</feature>
<reference key="1">
    <citation type="journal article" date="2002" name="Nature">
        <title>Sequence and analysis of chromosome 2 of Dictyostelium discoideum.</title>
        <authorList>
            <person name="Gloeckner G."/>
            <person name="Eichinger L."/>
            <person name="Szafranski K."/>
            <person name="Pachebat J.A."/>
            <person name="Bankier A.T."/>
            <person name="Dear P.H."/>
            <person name="Lehmann R."/>
            <person name="Baumgart C."/>
            <person name="Parra G."/>
            <person name="Abril J.F."/>
            <person name="Guigo R."/>
            <person name="Kumpf K."/>
            <person name="Tunggal B."/>
            <person name="Cox E.C."/>
            <person name="Quail M.A."/>
            <person name="Platzer M."/>
            <person name="Rosenthal A."/>
            <person name="Noegel A.A."/>
        </authorList>
    </citation>
    <scope>NUCLEOTIDE SEQUENCE [LARGE SCALE GENOMIC DNA]</scope>
    <source>
        <strain>AX4</strain>
    </source>
</reference>
<reference key="2">
    <citation type="journal article" date="2005" name="Nature">
        <title>The genome of the social amoeba Dictyostelium discoideum.</title>
        <authorList>
            <person name="Eichinger L."/>
            <person name="Pachebat J.A."/>
            <person name="Gloeckner G."/>
            <person name="Rajandream M.A."/>
            <person name="Sucgang R."/>
            <person name="Berriman M."/>
            <person name="Song J."/>
            <person name="Olsen R."/>
            <person name="Szafranski K."/>
            <person name="Xu Q."/>
            <person name="Tunggal B."/>
            <person name="Kummerfeld S."/>
            <person name="Madera M."/>
            <person name="Konfortov B.A."/>
            <person name="Rivero F."/>
            <person name="Bankier A.T."/>
            <person name="Lehmann R."/>
            <person name="Hamlin N."/>
            <person name="Davies R."/>
            <person name="Gaudet P."/>
            <person name="Fey P."/>
            <person name="Pilcher K."/>
            <person name="Chen G."/>
            <person name="Saunders D."/>
            <person name="Sodergren E.J."/>
            <person name="Davis P."/>
            <person name="Kerhornou A."/>
            <person name="Nie X."/>
            <person name="Hall N."/>
            <person name="Anjard C."/>
            <person name="Hemphill L."/>
            <person name="Bason N."/>
            <person name="Farbrother P."/>
            <person name="Desany B."/>
            <person name="Just E."/>
            <person name="Morio T."/>
            <person name="Rost R."/>
            <person name="Churcher C.M."/>
            <person name="Cooper J."/>
            <person name="Haydock S."/>
            <person name="van Driessche N."/>
            <person name="Cronin A."/>
            <person name="Goodhead I."/>
            <person name="Muzny D.M."/>
            <person name="Mourier T."/>
            <person name="Pain A."/>
            <person name="Lu M."/>
            <person name="Harper D."/>
            <person name="Lindsay R."/>
            <person name="Hauser H."/>
            <person name="James K.D."/>
            <person name="Quiles M."/>
            <person name="Madan Babu M."/>
            <person name="Saito T."/>
            <person name="Buchrieser C."/>
            <person name="Wardroper A."/>
            <person name="Felder M."/>
            <person name="Thangavelu M."/>
            <person name="Johnson D."/>
            <person name="Knights A."/>
            <person name="Loulseged H."/>
            <person name="Mungall K.L."/>
            <person name="Oliver K."/>
            <person name="Price C."/>
            <person name="Quail M.A."/>
            <person name="Urushihara H."/>
            <person name="Hernandez J."/>
            <person name="Rabbinowitsch E."/>
            <person name="Steffen D."/>
            <person name="Sanders M."/>
            <person name="Ma J."/>
            <person name="Kohara Y."/>
            <person name="Sharp S."/>
            <person name="Simmonds M.N."/>
            <person name="Spiegler S."/>
            <person name="Tivey A."/>
            <person name="Sugano S."/>
            <person name="White B."/>
            <person name="Walker D."/>
            <person name="Woodward J.R."/>
            <person name="Winckler T."/>
            <person name="Tanaka Y."/>
            <person name="Shaulsky G."/>
            <person name="Schleicher M."/>
            <person name="Weinstock G.M."/>
            <person name="Rosenthal A."/>
            <person name="Cox E.C."/>
            <person name="Chisholm R.L."/>
            <person name="Gibbs R.A."/>
            <person name="Loomis W.F."/>
            <person name="Platzer M."/>
            <person name="Kay R.R."/>
            <person name="Williams J.G."/>
            <person name="Dear P.H."/>
            <person name="Noegel A.A."/>
            <person name="Barrell B.G."/>
            <person name="Kuspa A."/>
        </authorList>
    </citation>
    <scope>NUCLEOTIDE SEQUENCE [LARGE SCALE GENOMIC DNA]</scope>
    <source>
        <strain>AX4</strain>
    </source>
</reference>
<organism>
    <name type="scientific">Dictyostelium discoideum</name>
    <name type="common">Social amoeba</name>
    <dbReference type="NCBI Taxonomy" id="44689"/>
    <lineage>
        <taxon>Eukaryota</taxon>
        <taxon>Amoebozoa</taxon>
        <taxon>Evosea</taxon>
        <taxon>Eumycetozoa</taxon>
        <taxon>Dictyostelia</taxon>
        <taxon>Dictyosteliales</taxon>
        <taxon>Dictyosteliaceae</taxon>
        <taxon>Dictyostelium</taxon>
    </lineage>
</organism>